<sequence length="162" mass="18004">MLPLHISLEKKKVVIAGGGSIALRRLKTVISEGADITLVSPDVEPEIKQMAEERRIKWEKRTIEKEDYLNAFFIIAATDNAAVNKEIAQSASPFQLVNCVSDAELGNVYMPKIVKRGHVTVSVSTSGASPKHTKELAENVDKLIDGDFVAEVNRLYQMRRKK</sequence>
<proteinExistence type="evidence at protein level"/>
<feature type="chain" id="PRO_0000378490" description="Precorrin-2 dehydrogenase">
    <location>
        <begin position="1"/>
        <end position="162"/>
    </location>
</feature>
<feature type="binding site" evidence="1">
    <location>
        <begin position="20"/>
        <end position="21"/>
    </location>
    <ligand>
        <name>NAD(+)</name>
        <dbReference type="ChEBI" id="CHEBI:57540"/>
    </ligand>
</feature>
<feature type="binding site" evidence="1">
    <location>
        <begin position="41"/>
        <end position="42"/>
    </location>
    <ligand>
        <name>NAD(+)</name>
        <dbReference type="ChEBI" id="CHEBI:57540"/>
    </ligand>
</feature>
<protein>
    <recommendedName>
        <fullName>Precorrin-2 dehydrogenase</fullName>
        <ecNumber>1.3.1.76</ecNumber>
    </recommendedName>
</protein>
<name>SIRC_BACSU</name>
<organism>
    <name type="scientific">Bacillus subtilis (strain 168)</name>
    <dbReference type="NCBI Taxonomy" id="224308"/>
    <lineage>
        <taxon>Bacteria</taxon>
        <taxon>Bacillati</taxon>
        <taxon>Bacillota</taxon>
        <taxon>Bacilli</taxon>
        <taxon>Bacillales</taxon>
        <taxon>Bacillaceae</taxon>
        <taxon>Bacillus</taxon>
    </lineage>
</organism>
<evidence type="ECO:0000250" key="1"/>
<evidence type="ECO:0000269" key="2">
    <source>
    </source>
</evidence>
<evidence type="ECO:0000269" key="3">
    <source>
    </source>
</evidence>
<evidence type="ECO:0000305" key="4"/>
<evidence type="ECO:0000305" key="5">
    <source>
    </source>
</evidence>
<keyword id="KW-0169">Cobalamin biosynthesis</keyword>
<keyword id="KW-0520">NAD</keyword>
<keyword id="KW-0560">Oxidoreductase</keyword>
<keyword id="KW-0627">Porphyrin biosynthesis</keyword>
<keyword id="KW-1185">Reference proteome</keyword>
<gene>
    <name type="primary">sirC</name>
    <name type="synonym">ylnF</name>
    <name type="ordered locus">BSU15630</name>
</gene>
<reference key="1">
    <citation type="submission" date="1997-10" db="EMBL/GenBank/DDBJ databases">
        <title>Cloning and sequencing 8 Kbp of DNA from Bacillus subtilis downstream of the pyr operon.</title>
        <authorList>
            <person name="Foulger D."/>
            <person name="Errington J."/>
        </authorList>
    </citation>
    <scope>NUCLEOTIDE SEQUENCE [GENOMIC DNA]</scope>
    <source>
        <strain>168</strain>
    </source>
</reference>
<reference key="2">
    <citation type="journal article" date="1997" name="Nature">
        <title>The complete genome sequence of the Gram-positive bacterium Bacillus subtilis.</title>
        <authorList>
            <person name="Kunst F."/>
            <person name="Ogasawara N."/>
            <person name="Moszer I."/>
            <person name="Albertini A.M."/>
            <person name="Alloni G."/>
            <person name="Azevedo V."/>
            <person name="Bertero M.G."/>
            <person name="Bessieres P."/>
            <person name="Bolotin A."/>
            <person name="Borchert S."/>
            <person name="Borriss R."/>
            <person name="Boursier L."/>
            <person name="Brans A."/>
            <person name="Braun M."/>
            <person name="Brignell S.C."/>
            <person name="Bron S."/>
            <person name="Brouillet S."/>
            <person name="Bruschi C.V."/>
            <person name="Caldwell B."/>
            <person name="Capuano V."/>
            <person name="Carter N.M."/>
            <person name="Choi S.-K."/>
            <person name="Codani J.-J."/>
            <person name="Connerton I.F."/>
            <person name="Cummings N.J."/>
            <person name="Daniel R.A."/>
            <person name="Denizot F."/>
            <person name="Devine K.M."/>
            <person name="Duesterhoeft A."/>
            <person name="Ehrlich S.D."/>
            <person name="Emmerson P.T."/>
            <person name="Entian K.-D."/>
            <person name="Errington J."/>
            <person name="Fabret C."/>
            <person name="Ferrari E."/>
            <person name="Foulger D."/>
            <person name="Fritz C."/>
            <person name="Fujita M."/>
            <person name="Fujita Y."/>
            <person name="Fuma S."/>
            <person name="Galizzi A."/>
            <person name="Galleron N."/>
            <person name="Ghim S.-Y."/>
            <person name="Glaser P."/>
            <person name="Goffeau A."/>
            <person name="Golightly E.J."/>
            <person name="Grandi G."/>
            <person name="Guiseppi G."/>
            <person name="Guy B.J."/>
            <person name="Haga K."/>
            <person name="Haiech J."/>
            <person name="Harwood C.R."/>
            <person name="Henaut A."/>
            <person name="Hilbert H."/>
            <person name="Holsappel S."/>
            <person name="Hosono S."/>
            <person name="Hullo M.-F."/>
            <person name="Itaya M."/>
            <person name="Jones L.-M."/>
            <person name="Joris B."/>
            <person name="Karamata D."/>
            <person name="Kasahara Y."/>
            <person name="Klaerr-Blanchard M."/>
            <person name="Klein C."/>
            <person name="Kobayashi Y."/>
            <person name="Koetter P."/>
            <person name="Koningstein G."/>
            <person name="Krogh S."/>
            <person name="Kumano M."/>
            <person name="Kurita K."/>
            <person name="Lapidus A."/>
            <person name="Lardinois S."/>
            <person name="Lauber J."/>
            <person name="Lazarevic V."/>
            <person name="Lee S.-M."/>
            <person name="Levine A."/>
            <person name="Liu H."/>
            <person name="Masuda S."/>
            <person name="Mauel C."/>
            <person name="Medigue C."/>
            <person name="Medina N."/>
            <person name="Mellado R.P."/>
            <person name="Mizuno M."/>
            <person name="Moestl D."/>
            <person name="Nakai S."/>
            <person name="Noback M."/>
            <person name="Noone D."/>
            <person name="O'Reilly M."/>
            <person name="Ogawa K."/>
            <person name="Ogiwara A."/>
            <person name="Oudega B."/>
            <person name="Park S.-H."/>
            <person name="Parro V."/>
            <person name="Pohl T.M."/>
            <person name="Portetelle D."/>
            <person name="Porwollik S."/>
            <person name="Prescott A.M."/>
            <person name="Presecan E."/>
            <person name="Pujic P."/>
            <person name="Purnelle B."/>
            <person name="Rapoport G."/>
            <person name="Rey M."/>
            <person name="Reynolds S."/>
            <person name="Rieger M."/>
            <person name="Rivolta C."/>
            <person name="Rocha E."/>
            <person name="Roche B."/>
            <person name="Rose M."/>
            <person name="Sadaie Y."/>
            <person name="Sato T."/>
            <person name="Scanlan E."/>
            <person name="Schleich S."/>
            <person name="Schroeter R."/>
            <person name="Scoffone F."/>
            <person name="Sekiguchi J."/>
            <person name="Sekowska A."/>
            <person name="Seror S.J."/>
            <person name="Serror P."/>
            <person name="Shin B.-S."/>
            <person name="Soldo B."/>
            <person name="Sorokin A."/>
            <person name="Tacconi E."/>
            <person name="Takagi T."/>
            <person name="Takahashi H."/>
            <person name="Takemaru K."/>
            <person name="Takeuchi M."/>
            <person name="Tamakoshi A."/>
            <person name="Tanaka T."/>
            <person name="Terpstra P."/>
            <person name="Tognoni A."/>
            <person name="Tosato V."/>
            <person name="Uchiyama S."/>
            <person name="Vandenbol M."/>
            <person name="Vannier F."/>
            <person name="Vassarotti A."/>
            <person name="Viari A."/>
            <person name="Wambutt R."/>
            <person name="Wedler E."/>
            <person name="Wedler H."/>
            <person name="Weitzenegger T."/>
            <person name="Winters P."/>
            <person name="Wipat A."/>
            <person name="Yamamoto H."/>
            <person name="Yamane K."/>
            <person name="Yasumoto K."/>
            <person name="Yata K."/>
            <person name="Yoshida K."/>
            <person name="Yoshikawa H.-F."/>
            <person name="Zumstein E."/>
            <person name="Yoshikawa H."/>
            <person name="Danchin A."/>
        </authorList>
    </citation>
    <scope>NUCLEOTIDE SEQUENCE [LARGE SCALE GENOMIC DNA]</scope>
    <source>
        <strain>168</strain>
    </source>
</reference>
<reference key="3">
    <citation type="journal article" date="1999" name="Microbiology">
        <title>Organization of genes for tetrapyrrole biosynthesis in Gram-positive bacteria.</title>
        <authorList>
            <person name="Johansson P."/>
            <person name="Hederstedt L."/>
        </authorList>
    </citation>
    <scope>FUNCTION IN SIROHEME SYNTHESIS</scope>
    <scope>DISRUPTION PHENOTYPE</scope>
    <source>
        <strain>168</strain>
    </source>
</reference>
<reference key="4">
    <citation type="journal article" date="2000" name="J. Bacteriol.">
        <title>Transcriptional control of the sulfur-regulated cysH operon, containing genes involved in L-cysteine biosynthesis in Bacillus subtilis.</title>
        <authorList>
            <person name="Mansilla M.C."/>
            <person name="Albanesi D."/>
            <person name="de Mendoza D."/>
        </authorList>
    </citation>
    <scope>INDUCTION</scope>
    <source>
        <strain>168 / JH642</strain>
    </source>
</reference>
<accession>O34813</accession>
<accession>Q796I3</accession>
<comment type="function">
    <text evidence="5">Catalyzes the dehydrogenation of precorrin-2 to form sirohydrochlorin which is used as a precursor in both siroheme biosynthesis and in the anaerobic branch of adenosylcobalamin biosynthesis.</text>
</comment>
<comment type="catalytic activity">
    <reaction>
        <text>precorrin-2 + NAD(+) = sirohydrochlorin + NADH + 2 H(+)</text>
        <dbReference type="Rhea" id="RHEA:15613"/>
        <dbReference type="ChEBI" id="CHEBI:15378"/>
        <dbReference type="ChEBI" id="CHEBI:57540"/>
        <dbReference type="ChEBI" id="CHEBI:57945"/>
        <dbReference type="ChEBI" id="CHEBI:58351"/>
        <dbReference type="ChEBI" id="CHEBI:58827"/>
        <dbReference type="EC" id="1.3.1.76"/>
    </reaction>
</comment>
<comment type="pathway">
    <text>Cofactor biosynthesis; adenosylcobalamin biosynthesis; sirohydrochlorin from precorrin-2: step 1/1.</text>
</comment>
<comment type="pathway">
    <text>Porphyrin-containing compound metabolism; siroheme biosynthesis; sirohydrochlorin from precorrin-2: step 1/1.</text>
</comment>
<comment type="induction">
    <text evidence="3">Up-regulated by sulfur starvation and repressed by cysteine. Also induced by O-acetyl-L-serine (OAS), a direct precursor of cysteine, maybe via inactivation of a putative transcriptional repressor of the cysH operon whose activity is controlled by the intracellular levels of OAS.</text>
</comment>
<comment type="disruption phenotype">
    <text evidence="2">Cells lacking this gene are unable to grow on minimal medium with nitrate as nitrogen source. Growth is restored only after addition of both cysteine and ammonia to the medium.</text>
</comment>
<comment type="similarity">
    <text evidence="4">Belongs to the precorrin-2 dehydrogenase / sirohydrochlorin ferrochelatase family.</text>
</comment>
<dbReference type="EC" id="1.3.1.76"/>
<dbReference type="EMBL" id="AJ000974">
    <property type="protein sequence ID" value="CAA04415.1"/>
    <property type="molecule type" value="Genomic_DNA"/>
</dbReference>
<dbReference type="EMBL" id="AL009126">
    <property type="protein sequence ID" value="CAB13437.1"/>
    <property type="molecule type" value="Genomic_DNA"/>
</dbReference>
<dbReference type="PIR" id="F69877">
    <property type="entry name" value="F69877"/>
</dbReference>
<dbReference type="RefSeq" id="NP_389446.1">
    <property type="nucleotide sequence ID" value="NC_000964.3"/>
</dbReference>
<dbReference type="RefSeq" id="WP_003232091.1">
    <property type="nucleotide sequence ID" value="NZ_OZ025638.1"/>
</dbReference>
<dbReference type="SMR" id="O34813"/>
<dbReference type="FunCoup" id="O34813">
    <property type="interactions" value="206"/>
</dbReference>
<dbReference type="STRING" id="224308.BSU15630"/>
<dbReference type="PaxDb" id="224308-BSU15630"/>
<dbReference type="EnsemblBacteria" id="CAB13437">
    <property type="protein sequence ID" value="CAB13437"/>
    <property type="gene ID" value="BSU_15630"/>
</dbReference>
<dbReference type="GeneID" id="938048"/>
<dbReference type="KEGG" id="bsu:BSU15630"/>
<dbReference type="PATRIC" id="fig|224308.179.peg.1703"/>
<dbReference type="eggNOG" id="COG1648">
    <property type="taxonomic scope" value="Bacteria"/>
</dbReference>
<dbReference type="InParanoid" id="O34813"/>
<dbReference type="OrthoDB" id="9773765at2"/>
<dbReference type="PhylomeDB" id="O34813"/>
<dbReference type="BioCyc" id="BSUB:BSU15630-MONOMER"/>
<dbReference type="UniPathway" id="UPA00148">
    <property type="reaction ID" value="UER00222"/>
</dbReference>
<dbReference type="UniPathway" id="UPA00262">
    <property type="reaction ID" value="UER00222"/>
</dbReference>
<dbReference type="Proteomes" id="UP000001570">
    <property type="component" value="Chromosome"/>
</dbReference>
<dbReference type="GO" id="GO:0004325">
    <property type="term" value="F:ferrochelatase activity"/>
    <property type="evidence" value="ECO:0007669"/>
    <property type="project" value="InterPro"/>
</dbReference>
<dbReference type="GO" id="GO:0043115">
    <property type="term" value="F:precorrin-2 dehydrogenase activity"/>
    <property type="evidence" value="ECO:0000318"/>
    <property type="project" value="GO_Central"/>
</dbReference>
<dbReference type="GO" id="GO:0009236">
    <property type="term" value="P:cobalamin biosynthetic process"/>
    <property type="evidence" value="ECO:0007669"/>
    <property type="project" value="UniProtKB-UniPathway"/>
</dbReference>
<dbReference type="GO" id="GO:0019354">
    <property type="term" value="P:siroheme biosynthetic process"/>
    <property type="evidence" value="ECO:0000318"/>
    <property type="project" value="GO_Central"/>
</dbReference>
<dbReference type="Gene3D" id="3.40.50.720">
    <property type="entry name" value="NAD(P)-binding Rossmann-like Domain"/>
    <property type="match status" value="1"/>
</dbReference>
<dbReference type="InterPro" id="IPR028161">
    <property type="entry name" value="Met8-like"/>
</dbReference>
<dbReference type="InterPro" id="IPR036291">
    <property type="entry name" value="NAD(P)-bd_dom_sf"/>
</dbReference>
<dbReference type="InterPro" id="IPR006367">
    <property type="entry name" value="Sirohaem_synthase_N"/>
</dbReference>
<dbReference type="NCBIfam" id="TIGR01470">
    <property type="entry name" value="cysG_Nterm"/>
    <property type="match status" value="1"/>
</dbReference>
<dbReference type="PANTHER" id="PTHR35330">
    <property type="entry name" value="SIROHEME BIOSYNTHESIS PROTEIN MET8"/>
    <property type="match status" value="1"/>
</dbReference>
<dbReference type="PANTHER" id="PTHR35330:SF1">
    <property type="entry name" value="SIROHEME BIOSYNTHESIS PROTEIN MET8"/>
    <property type="match status" value="1"/>
</dbReference>
<dbReference type="Pfam" id="PF13241">
    <property type="entry name" value="NAD_binding_7"/>
    <property type="match status" value="1"/>
</dbReference>
<dbReference type="SUPFAM" id="SSF51735">
    <property type="entry name" value="NAD(P)-binding Rossmann-fold domains"/>
    <property type="match status" value="1"/>
</dbReference>
<dbReference type="SUPFAM" id="SSF75615">
    <property type="entry name" value="Siroheme synthase middle domains-like"/>
    <property type="match status" value="1"/>
</dbReference>